<gene>
    <name type="primary">MAP2K6</name>
    <name type="synonym">MEK6</name>
    <name type="synonym">MKK6</name>
    <name type="synonym">PRKMK6</name>
    <name type="synonym">SKK3</name>
</gene>
<organism>
    <name type="scientific">Homo sapiens</name>
    <name type="common">Human</name>
    <dbReference type="NCBI Taxonomy" id="9606"/>
    <lineage>
        <taxon>Eukaryota</taxon>
        <taxon>Metazoa</taxon>
        <taxon>Chordata</taxon>
        <taxon>Craniata</taxon>
        <taxon>Vertebrata</taxon>
        <taxon>Euteleostomi</taxon>
        <taxon>Mammalia</taxon>
        <taxon>Eutheria</taxon>
        <taxon>Euarchontoglires</taxon>
        <taxon>Primates</taxon>
        <taxon>Haplorrhini</taxon>
        <taxon>Catarrhini</taxon>
        <taxon>Hominidae</taxon>
        <taxon>Homo</taxon>
    </lineage>
</organism>
<keyword id="KW-0002">3D-structure</keyword>
<keyword id="KW-0007">Acetylation</keyword>
<keyword id="KW-0025">Alternative splicing</keyword>
<keyword id="KW-0053">Apoptosis</keyword>
<keyword id="KW-0067">ATP-binding</keyword>
<keyword id="KW-0963">Cytoplasm</keyword>
<keyword id="KW-0206">Cytoskeleton</keyword>
<keyword id="KW-0418">Kinase</keyword>
<keyword id="KW-0547">Nucleotide-binding</keyword>
<keyword id="KW-0539">Nucleus</keyword>
<keyword id="KW-0597">Phosphoprotein</keyword>
<keyword id="KW-1267">Proteomics identification</keyword>
<keyword id="KW-1185">Reference proteome</keyword>
<keyword id="KW-0723">Serine/threonine-protein kinase</keyword>
<keyword id="KW-0346">Stress response</keyword>
<keyword id="KW-0804">Transcription</keyword>
<keyword id="KW-0805">Transcription regulation</keyword>
<keyword id="KW-0808">Transferase</keyword>
<keyword id="KW-0829">Tyrosine-protein kinase</keyword>
<keyword id="KW-0832">Ubl conjugation</keyword>
<sequence length="334" mass="37492">MSQSKGKKRNPGLKIPKEAFEQPQTSSTPPRDLDSKACISIGNQNFEVKADDLEPIMELGRGAYGVVEKMRHVPSGQIMAVKRIRATVNSQEQKRLLMDLDISMRTVDCPFTVTFYGALFREGDVWICMELMDTSLDKFYKQVIDKGQTIPEDILGKIAVSIVKALEHLHSKLSVIHRDVKPSNVLINALGQVKMCDFGISGYLVDSVAKTIDAGCKPYMAPERINPELNQKGYSVKSDIWSLGITMIELAILRFPYDSWGTPFQQLKQVVEEPSPQLPADKFSAEFVDFTSQCLKKNSKERPTYPELMQHPFFTLHESKGTDVASFVKLILGD</sequence>
<dbReference type="EC" id="2.7.12.2"/>
<dbReference type="EMBL" id="U39657">
    <property type="protein sequence ID" value="AAC50389.1"/>
    <property type="molecule type" value="mRNA"/>
</dbReference>
<dbReference type="EMBL" id="U39656">
    <property type="protein sequence ID" value="AAC50388.1"/>
    <property type="molecule type" value="mRNA"/>
</dbReference>
<dbReference type="EMBL" id="U49732">
    <property type="protein sequence ID" value="AAB05035.1"/>
    <property type="molecule type" value="mRNA"/>
</dbReference>
<dbReference type="EMBL" id="U39065">
    <property type="protein sequence ID" value="AAB03705.1"/>
    <property type="molecule type" value="mRNA"/>
</dbReference>
<dbReference type="EMBL" id="U39064">
    <property type="protein sequence ID" value="AAB03708.1"/>
    <property type="molecule type" value="mRNA"/>
</dbReference>
<dbReference type="EMBL" id="D87905">
    <property type="protein sequence ID" value="BAA13496.1"/>
    <property type="molecule type" value="mRNA"/>
</dbReference>
<dbReference type="EMBL" id="X96757">
    <property type="protein sequence ID" value="CAA65532.1"/>
    <property type="molecule type" value="mRNA"/>
</dbReference>
<dbReference type="EMBL" id="BC012009">
    <property type="protein sequence ID" value="AAH12009.1"/>
    <property type="molecule type" value="mRNA"/>
</dbReference>
<dbReference type="CCDS" id="CCDS11686.1">
    <molecule id="P52564-1"/>
</dbReference>
<dbReference type="CCDS" id="CCDS82194.1">
    <molecule id="P52564-2"/>
</dbReference>
<dbReference type="PIR" id="S71631">
    <property type="entry name" value="S71631"/>
</dbReference>
<dbReference type="RefSeq" id="NP_001317379.1">
    <molecule id="P52564-2"/>
    <property type="nucleotide sequence ID" value="NM_001330450.2"/>
</dbReference>
<dbReference type="RefSeq" id="NP_002749.2">
    <molecule id="P52564-1"/>
    <property type="nucleotide sequence ID" value="NM_002758.3"/>
</dbReference>
<dbReference type="RefSeq" id="XP_005257573.1">
    <molecule id="P52564-2"/>
    <property type="nucleotide sequence ID" value="XM_005257516.3"/>
</dbReference>
<dbReference type="RefSeq" id="XP_006722038.1">
    <molecule id="P52564-2"/>
    <property type="nucleotide sequence ID" value="XM_006721975.4"/>
</dbReference>
<dbReference type="RefSeq" id="XP_011523329.1">
    <molecule id="P52564-2"/>
    <property type="nucleotide sequence ID" value="XM_011525027.4"/>
</dbReference>
<dbReference type="RefSeq" id="XP_047292367.1">
    <molecule id="P52564-2"/>
    <property type="nucleotide sequence ID" value="XM_047436411.1"/>
</dbReference>
<dbReference type="RefSeq" id="XP_054172661.1">
    <molecule id="P52564-2"/>
    <property type="nucleotide sequence ID" value="XM_054316686.1"/>
</dbReference>
<dbReference type="RefSeq" id="XP_054172662.1">
    <molecule id="P52564-2"/>
    <property type="nucleotide sequence ID" value="XM_054316687.1"/>
</dbReference>
<dbReference type="RefSeq" id="XP_054172663.1">
    <molecule id="P52564-2"/>
    <property type="nucleotide sequence ID" value="XM_054316688.1"/>
</dbReference>
<dbReference type="RefSeq" id="XP_054172664.1">
    <molecule id="P52564-2"/>
    <property type="nucleotide sequence ID" value="XM_054316689.1"/>
</dbReference>
<dbReference type="PDB" id="2Y8O">
    <property type="method" value="X-ray"/>
    <property type="resolution" value="1.95 A"/>
    <property type="chains" value="B=4-17"/>
</dbReference>
<dbReference type="PDB" id="3ENM">
    <property type="method" value="X-ray"/>
    <property type="resolution" value="2.35 A"/>
    <property type="chains" value="A/B/C/D=45-332"/>
</dbReference>
<dbReference type="PDB" id="3FME">
    <property type="method" value="X-ray"/>
    <property type="resolution" value="2.26 A"/>
    <property type="chains" value="A=47-334"/>
</dbReference>
<dbReference type="PDB" id="3VN9">
    <property type="method" value="X-ray"/>
    <property type="resolution" value="2.60 A"/>
    <property type="chains" value="A=1-334"/>
</dbReference>
<dbReference type="PDB" id="5ETF">
    <property type="method" value="X-ray"/>
    <property type="resolution" value="2.40 A"/>
    <property type="chains" value="B=4-17"/>
</dbReference>
<dbReference type="PDB" id="8A8M">
    <property type="method" value="EM"/>
    <property type="resolution" value="4.00 A"/>
    <property type="chains" value="B=15-334"/>
</dbReference>
<dbReference type="PDB" id="8P7J">
    <property type="method" value="X-ray"/>
    <property type="resolution" value="2.40 A"/>
    <property type="chains" value="A/B=47-334"/>
</dbReference>
<dbReference type="PDB" id="8PM3">
    <property type="method" value="X-ray"/>
    <property type="resolution" value="2.00 A"/>
    <property type="chains" value="A/B/C/D=47-334"/>
</dbReference>
<dbReference type="PDBsum" id="2Y8O"/>
<dbReference type="PDBsum" id="3ENM"/>
<dbReference type="PDBsum" id="3FME"/>
<dbReference type="PDBsum" id="3VN9"/>
<dbReference type="PDBsum" id="5ETF"/>
<dbReference type="PDBsum" id="8A8M"/>
<dbReference type="PDBsum" id="8P7J"/>
<dbReference type="PDBsum" id="8PM3"/>
<dbReference type="EMDB" id="EMD-15233"/>
<dbReference type="SMR" id="P52564"/>
<dbReference type="BioGRID" id="111594">
    <property type="interactions" value="72"/>
</dbReference>
<dbReference type="DIP" id="DIP-31346N"/>
<dbReference type="ELM" id="P52564"/>
<dbReference type="FunCoup" id="P52564">
    <property type="interactions" value="3331"/>
</dbReference>
<dbReference type="IntAct" id="P52564">
    <property type="interactions" value="23"/>
</dbReference>
<dbReference type="MINT" id="P52564"/>
<dbReference type="STRING" id="9606.ENSP00000468348"/>
<dbReference type="BindingDB" id="P52564"/>
<dbReference type="ChEMBL" id="CHEMBL2171"/>
<dbReference type="DrugBank" id="DB12010">
    <property type="generic name" value="Fostamatinib"/>
</dbReference>
<dbReference type="DrugBank" id="DB14904">
    <property type="generic name" value="Pimasertib"/>
</dbReference>
<dbReference type="DrugCentral" id="P52564"/>
<dbReference type="GuidetoPHARMACOLOGY" id="2067"/>
<dbReference type="GlyGen" id="P52564">
    <property type="glycosylation" value="1 site, 1 O-linked glycan (1 site)"/>
</dbReference>
<dbReference type="iPTMnet" id="P52564"/>
<dbReference type="MetOSite" id="P52564"/>
<dbReference type="PhosphoSitePlus" id="P52564"/>
<dbReference type="BioMuta" id="MAP2K6"/>
<dbReference type="DMDM" id="1709088"/>
<dbReference type="CPTAC" id="CPTAC-2907"/>
<dbReference type="CPTAC" id="CPTAC-820"/>
<dbReference type="CPTAC" id="CPTAC-821"/>
<dbReference type="jPOST" id="P52564"/>
<dbReference type="MassIVE" id="P52564"/>
<dbReference type="PaxDb" id="9606-ENSP00000468348"/>
<dbReference type="PeptideAtlas" id="P52564"/>
<dbReference type="ProteomicsDB" id="56487">
    <molecule id="P52564-1"/>
</dbReference>
<dbReference type="ProteomicsDB" id="56488">
    <molecule id="P52564-2"/>
</dbReference>
<dbReference type="Pumba" id="P52564"/>
<dbReference type="Antibodypedia" id="3570">
    <property type="antibodies" value="880 antibodies from 41 providers"/>
</dbReference>
<dbReference type="DNASU" id="5608"/>
<dbReference type="Ensembl" id="ENST00000589647.5">
    <molecule id="P52564-2"/>
    <property type="protein sequence ID" value="ENSP00000467213.1"/>
    <property type="gene ID" value="ENSG00000108984.16"/>
</dbReference>
<dbReference type="Ensembl" id="ENST00000590474.7">
    <molecule id="P52564-1"/>
    <property type="protein sequence ID" value="ENSP00000468348.1"/>
    <property type="gene ID" value="ENSG00000108984.16"/>
</dbReference>
<dbReference type="GeneID" id="5608"/>
<dbReference type="KEGG" id="hsa:5608"/>
<dbReference type="MANE-Select" id="ENST00000590474.7">
    <property type="protein sequence ID" value="ENSP00000468348.1"/>
    <property type="RefSeq nucleotide sequence ID" value="NM_002758.4"/>
    <property type="RefSeq protein sequence ID" value="NP_002749.2"/>
</dbReference>
<dbReference type="UCSC" id="uc002jij.4">
    <molecule id="P52564-1"/>
    <property type="organism name" value="human"/>
</dbReference>
<dbReference type="AGR" id="HGNC:6846"/>
<dbReference type="CTD" id="5608"/>
<dbReference type="DisGeNET" id="5608"/>
<dbReference type="GeneCards" id="MAP2K6"/>
<dbReference type="HGNC" id="HGNC:6846">
    <property type="gene designation" value="MAP2K6"/>
</dbReference>
<dbReference type="HPA" id="ENSG00000108984">
    <property type="expression patterns" value="Tissue enhanced (intestine, skeletal muscle)"/>
</dbReference>
<dbReference type="MIM" id="601254">
    <property type="type" value="gene"/>
</dbReference>
<dbReference type="neXtProt" id="NX_P52564"/>
<dbReference type="OpenTargets" id="ENSG00000108984"/>
<dbReference type="PharmGKB" id="PA30591"/>
<dbReference type="VEuPathDB" id="HostDB:ENSG00000108984"/>
<dbReference type="eggNOG" id="KOG0984">
    <property type="taxonomic scope" value="Eukaryota"/>
</dbReference>
<dbReference type="GeneTree" id="ENSGT00940000157836"/>
<dbReference type="HOGENOM" id="CLU_000288_63_23_1"/>
<dbReference type="InParanoid" id="P52564"/>
<dbReference type="OMA" id="FPYNTWG"/>
<dbReference type="OrthoDB" id="10252354at2759"/>
<dbReference type="PAN-GO" id="P52564">
    <property type="GO annotations" value="2 GO annotations based on evolutionary models"/>
</dbReference>
<dbReference type="PhylomeDB" id="P52564"/>
<dbReference type="BRENDA" id="2.7.12.2">
    <property type="organism ID" value="2681"/>
</dbReference>
<dbReference type="PathwayCommons" id="P52564"/>
<dbReference type="Reactome" id="R-HSA-168638">
    <property type="pathway name" value="NOD1/2 Signaling Pathway"/>
</dbReference>
<dbReference type="Reactome" id="R-HSA-2559580">
    <property type="pathway name" value="Oxidative Stress Induced Senescence"/>
</dbReference>
<dbReference type="Reactome" id="R-HSA-450302">
    <property type="pathway name" value="activated TAK1 mediates p38 MAPK activation"/>
</dbReference>
<dbReference type="Reactome" id="R-HSA-5210891">
    <molecule id="P52564-1"/>
    <property type="pathway name" value="Uptake and function of anthrax toxins"/>
</dbReference>
<dbReference type="Reactome" id="R-HSA-525793">
    <property type="pathway name" value="Myogenesis"/>
</dbReference>
<dbReference type="Reactome" id="R-HSA-6811555">
    <property type="pathway name" value="PI5P Regulates TP53 Acetylation"/>
</dbReference>
<dbReference type="Reactome" id="R-HSA-9020702">
    <property type="pathway name" value="Interleukin-1 signaling"/>
</dbReference>
<dbReference type="Reactome" id="R-HSA-9833482">
    <property type="pathway name" value="PKR-mediated signaling"/>
</dbReference>
<dbReference type="SignaLink" id="P52564"/>
<dbReference type="SIGNOR" id="P52564"/>
<dbReference type="BioGRID-ORCS" id="5608">
    <property type="hits" value="16 hits in 1190 CRISPR screens"/>
</dbReference>
<dbReference type="ChiTaRS" id="MAP2K6">
    <property type="organism name" value="human"/>
</dbReference>
<dbReference type="EvolutionaryTrace" id="P52564"/>
<dbReference type="GeneWiki" id="MAP2K6"/>
<dbReference type="GenomeRNAi" id="5608"/>
<dbReference type="Pharos" id="P52564">
    <property type="development level" value="Tchem"/>
</dbReference>
<dbReference type="PRO" id="PR:P52564"/>
<dbReference type="Proteomes" id="UP000005640">
    <property type="component" value="Chromosome 17"/>
</dbReference>
<dbReference type="RNAct" id="P52564">
    <property type="molecule type" value="protein"/>
</dbReference>
<dbReference type="Bgee" id="ENSG00000108984">
    <property type="expression patterns" value="Expressed in rectum and 177 other cell types or tissues"/>
</dbReference>
<dbReference type="ExpressionAtlas" id="P52564">
    <property type="expression patterns" value="baseline and differential"/>
</dbReference>
<dbReference type="GO" id="GO:0005737">
    <property type="term" value="C:cytoplasm"/>
    <property type="evidence" value="ECO:0000304"/>
    <property type="project" value="UniProt"/>
</dbReference>
<dbReference type="GO" id="GO:0005856">
    <property type="term" value="C:cytoskeleton"/>
    <property type="evidence" value="ECO:0007669"/>
    <property type="project" value="UniProtKB-SubCell"/>
</dbReference>
<dbReference type="GO" id="GO:0005829">
    <property type="term" value="C:cytosol"/>
    <property type="evidence" value="ECO:0000314"/>
    <property type="project" value="HPA"/>
</dbReference>
<dbReference type="GO" id="GO:0005654">
    <property type="term" value="C:nucleoplasm"/>
    <property type="evidence" value="ECO:0000314"/>
    <property type="project" value="HPA"/>
</dbReference>
<dbReference type="GO" id="GO:0005524">
    <property type="term" value="F:ATP binding"/>
    <property type="evidence" value="ECO:0007669"/>
    <property type="project" value="UniProtKB-KW"/>
</dbReference>
<dbReference type="GO" id="GO:0042802">
    <property type="term" value="F:identical protein binding"/>
    <property type="evidence" value="ECO:0000353"/>
    <property type="project" value="IntAct"/>
</dbReference>
<dbReference type="GO" id="GO:0004708">
    <property type="term" value="F:MAP kinase kinase activity"/>
    <property type="evidence" value="ECO:0000314"/>
    <property type="project" value="UniProtKB"/>
</dbReference>
<dbReference type="GO" id="GO:0019901">
    <property type="term" value="F:protein kinase binding"/>
    <property type="evidence" value="ECO:0000353"/>
    <property type="project" value="UniProtKB"/>
</dbReference>
<dbReference type="GO" id="GO:0106310">
    <property type="term" value="F:protein serine kinase activity"/>
    <property type="evidence" value="ECO:0007669"/>
    <property type="project" value="RHEA"/>
</dbReference>
<dbReference type="GO" id="GO:0004674">
    <property type="term" value="F:protein serine/threonine kinase activity"/>
    <property type="evidence" value="ECO:0000304"/>
    <property type="project" value="Reactome"/>
</dbReference>
<dbReference type="GO" id="GO:0004713">
    <property type="term" value="F:protein tyrosine kinase activity"/>
    <property type="evidence" value="ECO:0007669"/>
    <property type="project" value="UniProtKB-KW"/>
</dbReference>
<dbReference type="GO" id="GO:0006915">
    <property type="term" value="P:apoptotic process"/>
    <property type="evidence" value="ECO:0007669"/>
    <property type="project" value="UniProtKB-KW"/>
</dbReference>
<dbReference type="GO" id="GO:0060348">
    <property type="term" value="P:bone development"/>
    <property type="evidence" value="ECO:0007669"/>
    <property type="project" value="Ensembl"/>
</dbReference>
<dbReference type="GO" id="GO:0060048">
    <property type="term" value="P:cardiac muscle contraction"/>
    <property type="evidence" value="ECO:0007669"/>
    <property type="project" value="Ensembl"/>
</dbReference>
<dbReference type="GO" id="GO:0090398">
    <property type="term" value="P:cellular senescence"/>
    <property type="evidence" value="ECO:0000304"/>
    <property type="project" value="Reactome"/>
</dbReference>
<dbReference type="GO" id="GO:0000165">
    <property type="term" value="P:MAPK cascade"/>
    <property type="evidence" value="ECO:0000314"/>
    <property type="project" value="GO_Central"/>
</dbReference>
<dbReference type="GO" id="GO:0120163">
    <property type="term" value="P:negative regulation of cold-induced thermogenesis"/>
    <property type="evidence" value="ECO:0000250"/>
    <property type="project" value="YuBioLab"/>
</dbReference>
<dbReference type="GO" id="GO:0035872">
    <property type="term" value="P:nucleotide-binding domain, leucine rich repeat containing receptor signaling pathway"/>
    <property type="evidence" value="ECO:0000304"/>
    <property type="project" value="Reactome"/>
</dbReference>
<dbReference type="GO" id="GO:0001649">
    <property type="term" value="P:osteoblast differentiation"/>
    <property type="evidence" value="ECO:0007669"/>
    <property type="project" value="Ensembl"/>
</dbReference>
<dbReference type="GO" id="GO:0038066">
    <property type="term" value="P:p38MAPK cascade"/>
    <property type="evidence" value="ECO:0000314"/>
    <property type="project" value="UniProt"/>
</dbReference>
<dbReference type="GO" id="GO:0043410">
    <property type="term" value="P:positive regulation of MAPK cascade"/>
    <property type="evidence" value="ECO:0007669"/>
    <property type="project" value="Ensembl"/>
</dbReference>
<dbReference type="GO" id="GO:0051726">
    <property type="term" value="P:regulation of cell cycle"/>
    <property type="evidence" value="ECO:0000304"/>
    <property type="project" value="ProtInc"/>
</dbReference>
<dbReference type="GO" id="GO:1901796">
    <property type="term" value="P:regulation of signal transduction by p53 class mediator"/>
    <property type="evidence" value="ECO:0000304"/>
    <property type="project" value="Reactome"/>
</dbReference>
<dbReference type="GO" id="GO:0007165">
    <property type="term" value="P:signal transduction"/>
    <property type="evidence" value="ECO:0000304"/>
    <property type="project" value="ProtInc"/>
</dbReference>
<dbReference type="GO" id="GO:0042770">
    <property type="term" value="P:signal transduction in response to DNA damage"/>
    <property type="evidence" value="ECO:0000304"/>
    <property type="project" value="ProtInc"/>
</dbReference>
<dbReference type="GO" id="GO:0051403">
    <property type="term" value="P:stress-activated MAPK cascade"/>
    <property type="evidence" value="ECO:0000314"/>
    <property type="project" value="UniProtKB"/>
</dbReference>
<dbReference type="GO" id="GO:0031098">
    <property type="term" value="P:stress-activated protein kinase signaling cascade"/>
    <property type="evidence" value="ECO:0000314"/>
    <property type="project" value="UniProt"/>
</dbReference>
<dbReference type="CDD" id="cd06617">
    <property type="entry name" value="PKc_MKK3_6"/>
    <property type="match status" value="1"/>
</dbReference>
<dbReference type="DisProt" id="DP01342"/>
<dbReference type="FunFam" id="3.30.200.20:FF:000040">
    <property type="entry name" value="Dual specificity mitogen-activated protein kinase kinase"/>
    <property type="match status" value="1"/>
</dbReference>
<dbReference type="FunFam" id="1.10.510.10:FF:000158">
    <property type="entry name" value="Dual specificity mitogen-activated protein kinase kinase 6"/>
    <property type="match status" value="1"/>
</dbReference>
<dbReference type="Gene3D" id="3.30.200.20">
    <property type="entry name" value="Phosphorylase Kinase, domain 1"/>
    <property type="match status" value="1"/>
</dbReference>
<dbReference type="Gene3D" id="1.10.510.10">
    <property type="entry name" value="Transferase(Phosphotransferase) domain 1"/>
    <property type="match status" value="1"/>
</dbReference>
<dbReference type="IDEAL" id="IID00455"/>
<dbReference type="InterPro" id="IPR011009">
    <property type="entry name" value="Kinase-like_dom_sf"/>
</dbReference>
<dbReference type="InterPro" id="IPR000719">
    <property type="entry name" value="Prot_kinase_dom"/>
</dbReference>
<dbReference type="InterPro" id="IPR017441">
    <property type="entry name" value="Protein_kinase_ATP_BS"/>
</dbReference>
<dbReference type="InterPro" id="IPR008271">
    <property type="entry name" value="Ser/Thr_kinase_AS"/>
</dbReference>
<dbReference type="PANTHER" id="PTHR48013">
    <property type="entry name" value="DUAL SPECIFICITY MITOGEN-ACTIVATED PROTEIN KINASE KINASE 5-RELATED"/>
    <property type="match status" value="1"/>
</dbReference>
<dbReference type="PANTHER" id="PTHR48013:SF12">
    <property type="entry name" value="DUAL SPECIFICITY MITOGEN-ACTIVATED PROTEIN KINASE KINASE 6"/>
    <property type="match status" value="1"/>
</dbReference>
<dbReference type="Pfam" id="PF00069">
    <property type="entry name" value="Pkinase"/>
    <property type="match status" value="1"/>
</dbReference>
<dbReference type="PIRSF" id="PIRSF000654">
    <property type="entry name" value="Integrin-linked_kinase"/>
    <property type="match status" value="1"/>
</dbReference>
<dbReference type="SMART" id="SM00220">
    <property type="entry name" value="S_TKc"/>
    <property type="match status" value="1"/>
</dbReference>
<dbReference type="SUPFAM" id="SSF56112">
    <property type="entry name" value="Protein kinase-like (PK-like)"/>
    <property type="match status" value="1"/>
</dbReference>
<dbReference type="PROSITE" id="PS00107">
    <property type="entry name" value="PROTEIN_KINASE_ATP"/>
    <property type="match status" value="1"/>
</dbReference>
<dbReference type="PROSITE" id="PS50011">
    <property type="entry name" value="PROTEIN_KINASE_DOM"/>
    <property type="match status" value="1"/>
</dbReference>
<dbReference type="PROSITE" id="PS00108">
    <property type="entry name" value="PROTEIN_KINASE_ST"/>
    <property type="match status" value="1"/>
</dbReference>
<comment type="function">
    <text evidence="6 7 10 15 19 20 21 22">Dual specificity protein kinase which acts as an essential component of the MAP kinase signal transduction pathway. With MAP3K3/MKK3, catalyzes the concomitant phosphorylation of a threonine and a tyrosine residue in the MAP kinases p38 MAPK11, MAPK12, MAPK13 and MAPK14 and plays an important role in the regulation of cellular responses to cytokines and all kinds of stresses. Especially, MAP2K3/MKK3 and MAP2K6/MKK6 are both essential for the activation of MAPK11 and MAPK13 induced by environmental stress, whereas MAP2K6/MKK6 is the major MAPK11 activator in response to TNF. MAP2K6/MKK6 also phosphorylates and activates PAK6. The p38 MAP kinase signal transduction pathway leads to direct activation of transcription factors. Nuclear targets of p38 MAP kinase include the transcription factors ATF2 and ELK1. Within the p38 MAPK signal transduction pathway, MAP3K6/MKK6 mediates phosphorylation of STAT4 through MAPK14 activation, and is therefore required for STAT4 activation and STAT4-regulated gene expression in response to IL-12 stimulation. The pathway is also crucial for IL-6-induced SOCS3 expression and down-regulation of IL-6-mediated gene induction; and for IFNG-dependent gene transcription. Has a role in osteoclast differentiation through NF-kappa-B transactivation by TNFSF11, and in endochondral ossification and since SOX9 is another likely downstream target of the p38 MAPK pathway. MAP2K6/MKK6 mediates apoptotic cell death in thymocytes. Acts also as a regulator for melanocytes dendricity, through the modulation of Rho family GTPases.</text>
</comment>
<comment type="catalytic activity">
    <reaction>
        <text>L-seryl-[protein] + ATP = O-phospho-L-seryl-[protein] + ADP + H(+)</text>
        <dbReference type="Rhea" id="RHEA:17989"/>
        <dbReference type="Rhea" id="RHEA-COMP:9863"/>
        <dbReference type="Rhea" id="RHEA-COMP:11604"/>
        <dbReference type="ChEBI" id="CHEBI:15378"/>
        <dbReference type="ChEBI" id="CHEBI:29999"/>
        <dbReference type="ChEBI" id="CHEBI:30616"/>
        <dbReference type="ChEBI" id="CHEBI:83421"/>
        <dbReference type="ChEBI" id="CHEBI:456216"/>
        <dbReference type="EC" id="2.7.12.2"/>
    </reaction>
</comment>
<comment type="catalytic activity">
    <reaction>
        <text>L-threonyl-[protein] + ATP = O-phospho-L-threonyl-[protein] + ADP + H(+)</text>
        <dbReference type="Rhea" id="RHEA:46608"/>
        <dbReference type="Rhea" id="RHEA-COMP:11060"/>
        <dbReference type="Rhea" id="RHEA-COMP:11605"/>
        <dbReference type="ChEBI" id="CHEBI:15378"/>
        <dbReference type="ChEBI" id="CHEBI:30013"/>
        <dbReference type="ChEBI" id="CHEBI:30616"/>
        <dbReference type="ChEBI" id="CHEBI:61977"/>
        <dbReference type="ChEBI" id="CHEBI:456216"/>
        <dbReference type="EC" id="2.7.12.2"/>
    </reaction>
</comment>
<comment type="catalytic activity">
    <reaction>
        <text>L-tyrosyl-[protein] + ATP = O-phospho-L-tyrosyl-[protein] + ADP + H(+)</text>
        <dbReference type="Rhea" id="RHEA:10596"/>
        <dbReference type="Rhea" id="RHEA-COMP:10136"/>
        <dbReference type="Rhea" id="RHEA-COMP:20101"/>
        <dbReference type="ChEBI" id="CHEBI:15378"/>
        <dbReference type="ChEBI" id="CHEBI:30616"/>
        <dbReference type="ChEBI" id="CHEBI:46858"/>
        <dbReference type="ChEBI" id="CHEBI:61978"/>
        <dbReference type="ChEBI" id="CHEBI:456216"/>
        <dbReference type="EC" id="2.7.12.2"/>
    </reaction>
</comment>
<comment type="activity regulation">
    <text evidence="14 20 21">Activated by dual phosphorylation on Ser-207 and Thr-211 in response to a variety of cellular stresses, including UV radiation, osmotic shock, hypoxia, inflammatory cytokines, interferon gamma (IFNG), and less often by growth factors. MAP2K6/MKK6 is activated by the majority of M3Ks, such as MAP3K5/ASK1, MAP3K1/MEKK1, MAP3K2/MEKK2, MAP3K3/MEKK3, MAP3K4/MEKK4, MAP3K7/TAK1, MAP3K11/MLK3 and MAP3K17/TAOK2.</text>
</comment>
<comment type="subunit">
    <text evidence="1 5 8 9 13">Dimer. Interacts (via its D domain) with its substrates MAPK11, MAPK12, MAPK13 and MAPK14 (By similarity). Interacts (via its DVD domain) with MAP3Ks activators like MAP3K5/ASK1, MAP3K1/MEKK1, MAP3K2/MEKK2, MAP3K3/MEKK3, MAP3K4/MEKK4, MAP3K7/TAK1, MAP3K11/MLK3 and MAP3K17/TAOK2 (By similarity). Interacts with DCTN1. Interacts with EIF2AK2/PKR.</text>
</comment>
<comment type="subunit">
    <text evidence="12">(Microbial infection) Interacts with Yersinia YopJ.</text>
</comment>
<comment type="interaction">
    <interactant intactId="EBI-448135">
        <id>P52564</id>
    </interactant>
    <interactant intactId="EBI-5323863">
        <id>Q5S007</id>
        <label>LRRK2</label>
    </interactant>
    <organismsDiffer>false</organismsDiffer>
    <experiments>4</experiments>
</comment>
<comment type="interaction">
    <interactant intactId="EBI-448135">
        <id>P52564</id>
    </interactant>
    <interactant intactId="EBI-73946">
        <id>Q16539</id>
        <label>MAPK14</label>
    </interactant>
    <organismsDiffer>false</organismsDiffer>
    <experiments>3</experiments>
</comment>
<comment type="interaction">
    <interactant intactId="EBI-448135">
        <id>P52564</id>
    </interactant>
    <interactant intactId="EBI-2007911">
        <id>Q16236</id>
        <label>NFE2L2</label>
    </interactant>
    <organismsDiffer>false</organismsDiffer>
    <experiments>5</experiments>
</comment>
<comment type="interaction">
    <interactant intactId="EBI-448135">
        <id>P52564</id>
    </interactant>
    <interactant intactId="EBI-79165">
        <id>Q9NRD5</id>
        <label>PICK1</label>
    </interactant>
    <organismsDiffer>false</organismsDiffer>
    <experiments>3</experiments>
</comment>
<comment type="interaction">
    <interactant intactId="EBI-448135">
        <id>P52564</id>
    </interactant>
    <interactant intactId="EBI-720609">
        <id>O76024</id>
        <label>WFS1</label>
    </interactant>
    <organismsDiffer>false</organismsDiffer>
    <experiments>3</experiments>
</comment>
<comment type="interaction">
    <interactant intactId="EBI-15750978">
        <id>P52564-1</id>
    </interactant>
    <interactant intactId="EBI-15750978">
        <id>P52564-1</id>
        <label>MAP2K6</label>
    </interactant>
    <organismsDiffer>false</organismsDiffer>
    <experiments>3</experiments>
</comment>
<comment type="subcellular location">
    <subcellularLocation>
        <location evidence="23">Nucleus</location>
    </subcellularLocation>
    <subcellularLocation>
        <location evidence="23">Cytoplasm</location>
    </subcellularLocation>
    <subcellularLocation>
        <location evidence="23">Cytoplasm</location>
        <location evidence="23">Cytoskeleton</location>
    </subcellularLocation>
    <text evidence="23">Binds to microtubules.</text>
</comment>
<comment type="alternative products">
    <event type="alternative splicing"/>
    <isoform>
        <id>P52564-1</id>
        <name>1</name>
        <name>MKK6b</name>
        <sequence type="displayed"/>
    </isoform>
    <isoform>
        <id>P52564-2</id>
        <name>2</name>
        <name>MKK6</name>
        <sequence type="described" ref="VSP_004882"/>
    </isoform>
</comment>
<comment type="tissue specificity">
    <text evidence="18">Isoform 2 is only expressed in skeletal muscle. Isoform 1 is expressed in skeletal muscle, heart, and in lesser extent in liver or pancreas.</text>
</comment>
<comment type="induction">
    <text>Strongly activated by UV, anisomycin, and osmotic shock but not by phorbol esters, NGF or EGF.</text>
</comment>
<comment type="domain">
    <text evidence="11">The DVD domain (residues 311-334) contains a conserved docking site and is found in the mammalian MAP kinase kinases (MAP2Ks). The DVD sites bind to their specific upstream MAP kinase kinase kinases (MAP3Ks) and are essential for activation.</text>
</comment>
<comment type="domain">
    <text evidence="1">The D domain (residues 4-19) contains a conserved docking site and is required for the binding to MAPK substrates.</text>
</comment>
<comment type="PTM">
    <text evidence="12 17">Weakly autophosphorylated (PubMed:16728640, PubMed:24936062). Phosphorylated at Ser-207 and Thr-211 by the majority of M3Ks, such as MAP3K5/ASK1, MAP3K1/MEKK1, MAP3K2/MEKK2, MAP3K3/MEKK3, MAP3K4/MEKK4, MAP3K7/TAK1, MAP3K11/MLK3 and MAP3K17/TAOK2 (PubMed:16728640, PubMed:24936062).</text>
</comment>
<comment type="PTM">
    <text evidence="17">In response to genotoxic stress, MAP3K-phosphorylated MAP2K6 is ubiquitinated and degraded by the SCF(FBXO31) complex.</text>
</comment>
<comment type="PTM">
    <text evidence="12 16">(Microbial infection) Acetylation of Ser-207 and Thr-211 by Yersinia YopJ prevents phosphorylation and activation, thus blocking the MAPK signaling pathway.</text>
</comment>
<comment type="similarity">
    <text evidence="25">Belongs to the protein kinase superfamily. STE Ser/Thr protein kinase family. MAP kinase kinase subfamily.</text>
</comment>
<reference key="1">
    <citation type="journal article" date="1996" name="Mol. Cell. Biol.">
        <title>MKK3- and MKK6-regulated gene expression is mediated by the p38 mitogen-activated protein kinase signal transduction pathway.</title>
        <authorList>
            <person name="Raingeaud J."/>
            <person name="Whitmarsh A.J."/>
            <person name="Barrett T."/>
            <person name="Derijard B."/>
            <person name="Davis R.J."/>
        </authorList>
    </citation>
    <scope>NUCLEOTIDE SEQUENCE [MRNA] (ISOFORM 1)</scope>
    <scope>MUTAGENESIS OF SER-207 AND THR-211</scope>
    <scope>FUNCTION</scope>
    <source>
        <tissue>Skeletal muscle</tissue>
    </source>
</reference>
<reference key="2">
    <citation type="journal article" date="1996" name="J. Biol. Chem.">
        <title>Cloning and characterization of MEK6, a novel member of the mitogen-activated protein kinase kinase cascade.</title>
        <authorList>
            <person name="Stein B."/>
            <person name="Brady H."/>
            <person name="Yang M.X."/>
            <person name="Young D.B."/>
            <person name="Barbosa M.S."/>
        </authorList>
    </citation>
    <scope>NUCLEOTIDE SEQUENCE [MRNA] (ISOFORM 1)</scope>
    <scope>FUNCTION</scope>
    <scope>ACTIVITY REGULATION</scope>
    <source>
        <tissue>T-cell</tissue>
    </source>
</reference>
<reference key="3">
    <citation type="journal article" date="1996" name="J. Biol. Chem.">
        <title>Characterization of the structure and function of a novel MAP kinase kinase (MKK6).</title>
        <authorList>
            <person name="Han J."/>
            <person name="Lee J.-D."/>
            <person name="Jiang Y."/>
            <person name="Li Z."/>
            <person name="Feng L."/>
            <person name="Ulevitch R.J."/>
        </authorList>
    </citation>
    <scope>NUCLEOTIDE SEQUENCE [MRNA] (ISOFORMS 1 AND 2)</scope>
    <scope>TISSUE SPECIFICITY</scope>
    <scope>MUTAGENESIS OF SER-207 AND THR-211</scope>
    <source>
        <tissue>Placenta</tissue>
    </source>
</reference>
<reference key="4">
    <citation type="journal article" date="1996" name="J. Biol. Chem.">
        <title>A novel kinase cascade mediated by mitogen-activated protein kinase kinase 6 and MKK3.</title>
        <authorList>
            <person name="Moriguchi T."/>
            <person name="Kuroyanagi N."/>
            <person name="Yamaguchi K."/>
            <person name="Gotoh Y."/>
            <person name="Irie K."/>
            <person name="Kano T."/>
            <person name="Shirakabe K."/>
            <person name="Muro Y."/>
            <person name="Shibuya H."/>
            <person name="Matsumoto K."/>
            <person name="Nishida E."/>
            <person name="Hagiwara M."/>
        </authorList>
    </citation>
    <scope>NUCLEOTIDE SEQUENCE [MRNA] (ISOFORM 1)</scope>
    <scope>PHOSPHORYLATION</scope>
    <scope>ACTIVITY REGULATION</scope>
    <scope>FUNCTION</scope>
</reference>
<reference key="5">
    <citation type="journal article" date="1996" name="EMBO J.">
        <title>Purification and cDNA cloning of SAPKK3, the major activator of RK/p38 in stress- and cytokine-stimulated monocytes and epithelial cells.</title>
        <authorList>
            <person name="Cuenda A."/>
            <person name="Alonso G."/>
            <person name="Morrice N."/>
            <person name="Jones M."/>
            <person name="Meier R."/>
            <person name="Cohen P."/>
            <person name="Nebreda A.R."/>
        </authorList>
    </citation>
    <scope>NUCLEOTIDE SEQUENCE [MRNA] (ISOFORM 1)</scope>
</reference>
<reference key="6">
    <citation type="journal article" date="2004" name="Genome Res.">
        <title>The status, quality, and expansion of the NIH full-length cDNA project: the Mammalian Gene Collection (MGC).</title>
        <authorList>
            <consortium name="The MGC Project Team"/>
        </authorList>
    </citation>
    <scope>NUCLEOTIDE SEQUENCE [LARGE SCALE MRNA] (ISOFORM 1)</scope>
    <source>
        <tissue>Urinary bladder</tissue>
    </source>
</reference>
<reference key="7">
    <citation type="journal article" date="1997" name="EMBO J.">
        <title>Activation of the novel stress-activated protein kinase SAPK4 by cytokines and cellular stresses is mediated by SKK3 (MKK6); comparison of its substrate specificity with that of other SAP kinases.</title>
        <authorList>
            <person name="Goedert M."/>
            <person name="Cuenda A."/>
            <person name="Craxton M."/>
            <person name="Jakes R."/>
            <person name="Cohen P."/>
        </authorList>
    </citation>
    <scope>FUNCTION IN ACTIVATION OF MAPK13</scope>
</reference>
<reference key="8">
    <citation type="journal article" date="1998" name="Curr. Biol.">
        <title>Nuclear export of the stress-activated protein kinase p38 mediated by its substrate MAPKAP kinase-2.</title>
        <authorList>
            <person name="Ben-Levy R."/>
            <person name="Hooper S."/>
            <person name="Wilson R."/>
            <person name="Paterson H.F."/>
            <person name="Marshall C.J."/>
        </authorList>
    </citation>
    <scope>SUBCELLULAR LOCATION</scope>
</reference>
<reference key="9">
    <citation type="journal article" date="1998" name="Biochem. J.">
        <title>Human mitogen-activated protein kinase kinase kinase mediates the stress-induced activation of mitogen-activated protein kinase cascades.</title>
        <authorList>
            <person name="Chan-Hui P.Y."/>
            <person name="Weaver R."/>
        </authorList>
    </citation>
    <scope>PHOSPHORYLATION BY MAP3K4</scope>
</reference>
<reference key="10">
    <citation type="journal article" date="1999" name="J. Biol. Chem.">
        <title>MEK kinase 3 directly activates MKK6 and MKK7, specific activators of the p38 and c-Jun NH2-terminal kinases.</title>
        <authorList>
            <person name="Deacon K."/>
            <person name="Blank J.L."/>
        </authorList>
    </citation>
    <scope>PHOSPHORYLATION BY MAP3K2/MEKK2 AND MAP3K3/MEK3</scope>
</reference>
<reference key="11">
    <citation type="journal article" date="1999" name="J. Biol. Chem.">
        <title>Isolation of the protein kinase TAO2 and identification of its mitogen-activated protein kinase/extracellular signal-regulated kinase kinase binding domain.</title>
        <authorList>
            <person name="Chen Z."/>
            <person name="Hutchison M."/>
            <person name="Cobb M.H."/>
        </authorList>
    </citation>
    <scope>INTERACTION WITH TAOK2</scope>
    <scope>PHOSPHORYLATION BY TAOK2</scope>
</reference>
<reference key="12">
    <citation type="journal article" date="1999" name="Nature">
        <title>The kinase TAK1 can activate the NIK-I kappaB as well as the MAP kinase cascade in the IL-1 signalling pathway.</title>
        <authorList>
            <person name="Ninomiya-Tsuji J."/>
            <person name="Kishimoto K."/>
            <person name="Hiyama A."/>
            <person name="Inoue J."/>
            <person name="Cao Z."/>
            <person name="Matsumoto K."/>
        </authorList>
    </citation>
    <scope>PHOSPHORYLATION BY MAP3K7/TAK1</scope>
</reference>
<reference key="13">
    <citation type="journal article" date="2000" name="Biochem. J.">
        <title>Susceptibility of mitogen-activated protein kinase kinase family members to proteolysis by anthrax lethal factor.</title>
        <authorList>
            <person name="Vitale G."/>
            <person name="Bernardi L."/>
            <person name="Napolitani G."/>
            <person name="Mock M."/>
            <person name="Montecucco C."/>
        </authorList>
    </citation>
    <scope>CLEAVAGE BY ANTHRAX LETHAL FACTOR</scope>
</reference>
<reference key="14">
    <citation type="journal article" date="2000" name="Blood">
        <title>Importance of the MKK6/p38 pathway for interleukin-12-induced STAT4 serine phosphorylation and transcriptional activity.</title>
        <authorList>
            <person name="Visconti R."/>
            <person name="Gadina M."/>
            <person name="Chiariello M."/>
            <person name="Chen E.H."/>
            <person name="Stancato L.F."/>
            <person name="Gutkind J.S."/>
            <person name="O'Shea J.J."/>
        </authorList>
    </citation>
    <scope>FUNCTION</scope>
</reference>
<reference key="15">
    <citation type="journal article" date="2001" name="Biol. Chem.">
        <title>The MKK6/p38 mitogen-activated protein kinase pathway is capable of inducing SOCS3 gene expression and inhibits IL-6-induced transcription.</title>
        <authorList>
            <person name="Bode J.G."/>
            <person name="Ludwig S."/>
            <person name="Freitas C.A."/>
            <person name="Schaper F."/>
            <person name="Ruhl M."/>
            <person name="Melmed S."/>
            <person name="Heinrich P.C."/>
            <person name="Haussinger D."/>
        </authorList>
    </citation>
    <scope>FUNCTION</scope>
</reference>
<reference key="16">
    <citation type="journal article" date="2001" name="EMBO J.">
        <title>Negative feedback regulation of ASK1 by protein phosphatase 5 (PP5) in response to oxidative stress.</title>
        <authorList>
            <person name="Morita K."/>
            <person name="Saitoh M."/>
            <person name="Tobiume K."/>
            <person name="Matsuura H."/>
            <person name="Enomoto S."/>
            <person name="Nishitoh H."/>
            <person name="Ichijo H."/>
        </authorList>
    </citation>
    <scope>PHOSPHORYLATION BY MAP3K5/ASK1</scope>
</reference>
<reference key="17">
    <citation type="journal article" date="2001" name="J. Biol. Chem.">
        <title>Regulation of stress-responsive mitogen-activated protein (MAP) kinase pathways by TAO2.</title>
        <authorList>
            <person name="Chen Z."/>
            <person name="Cobb M.H."/>
        </authorList>
    </citation>
    <scope>PHOSPHORYLATION BY TAOK2</scope>
</reference>
<reference key="18">
    <citation type="journal article" date="2001" name="Nature">
        <title>TAK1 is a ubiquitin-dependent kinase of MKK and IKK.</title>
        <authorList>
            <person name="Wang C."/>
            <person name="Deng L."/>
            <person name="Hong M."/>
            <person name="Akkaraju G.R."/>
            <person name="Inoue J."/>
            <person name="Chen Z.J."/>
        </authorList>
    </citation>
    <scope>PHOSPHORYLATION BY MAP3K7/TAK1</scope>
</reference>
<reference key="19">
    <citation type="journal article" date="2004" name="J. Biol. Chem.">
        <title>Protein kinase R (PKR) interacts with and activates mitogen-activated protein kinase kinase 6 (MKK6) in response to double-stranded RNA stimulation.</title>
        <authorList>
            <person name="Silva A.M."/>
            <person name="Whitmore M."/>
            <person name="Xu Z."/>
            <person name="Jiang Z."/>
            <person name="Li X."/>
            <person name="Williams B.R."/>
        </authorList>
    </citation>
    <scope>INTERACTION WITH EIF2AK2</scope>
    <scope>PHOSPHORYLATION</scope>
</reference>
<reference key="20">
    <citation type="journal article" date="2004" name="J. Biol. Chem.">
        <title>p150(Glued), Dynein, and microtubules are specifically required for activation of MKK3/6 and p38 MAPKs.</title>
        <authorList>
            <person name="Cheung P.Y."/>
            <person name="Zhang Y."/>
            <person name="Long J."/>
            <person name="Lin S."/>
            <person name="Zhang M."/>
            <person name="Jiang Y."/>
            <person name="Wu Z."/>
        </authorList>
    </citation>
    <scope>INTERACTION WITH DCTN1</scope>
    <scope>MICROTUBULE-BINDING</scope>
</reference>
<reference key="21">
    <citation type="journal article" date="2005" name="J. Biol. Chem.">
        <title>Activation of p21-activated kinase 6 by MAP kinase kinase 6 and p38 MAP kinase.</title>
        <authorList>
            <person name="Kaur R."/>
            <person name="Liu X."/>
            <person name="Gjoerup O."/>
            <person name="Zhang A."/>
            <person name="Yuan X."/>
            <person name="Balk S.P."/>
            <person name="Schneider M.C."/>
            <person name="Lu M.L."/>
        </authorList>
    </citation>
    <scope>FUNCTION IN PHOSPHORYLATION OF PAK6</scope>
</reference>
<reference key="22">
    <citation type="journal article" date="2005" name="Mol. Cell">
        <title>Conserved docking site is essential for activation of mammalian MAP kinase kinases by specific MAP kinase kinase kinases.</title>
        <authorList>
            <person name="Takekawa M."/>
            <person name="Tatebayashi K."/>
            <person name="Saito H."/>
        </authorList>
    </citation>
    <scope>DOMAIN</scope>
</reference>
<reference key="23">
    <citation type="journal article" date="2006" name="Science">
        <title>Yersinia YopJ acetylates and inhibits kinase activation by blocking phosphorylation.</title>
        <authorList>
            <person name="Mukherjee S."/>
            <person name="Keitany G."/>
            <person name="Li Y."/>
            <person name="Wang Y."/>
            <person name="Ball H.L."/>
            <person name="Goldsmith E.J."/>
            <person name="Orth K."/>
        </authorList>
    </citation>
    <scope>ACETYLATION AT SER-207 AND THR-211</scope>
    <scope>PHOSPHORYLATION AT SER-207 AND THR-211</scope>
    <scope>INACTIVATION BY YERSINIA YOPJ (MICROBIAL INFECTION)</scope>
    <scope>IDENTIFICATION BY MASS SPECTROMETRY</scope>
</reference>
<reference key="24">
    <citation type="journal article" date="2008" name="Proc. Natl. Acad. Sci. U.S.A.">
        <title>A quantitative atlas of mitotic phosphorylation.</title>
        <authorList>
            <person name="Dephoure N."/>
            <person name="Zhou C."/>
            <person name="Villen J."/>
            <person name="Beausoleil S.A."/>
            <person name="Bakalarski C.E."/>
            <person name="Elledge S.J."/>
            <person name="Gygi S.P."/>
        </authorList>
    </citation>
    <scope>IDENTIFICATION BY MASS SPECTROMETRY [LARGE SCALE ANALYSIS]</scope>
    <source>
        <tissue>Cervix carcinoma</tissue>
    </source>
</reference>
<reference key="25">
    <citation type="journal article" date="2010" name="Biochemistry">
        <title>Mechanism of oxidative stress-induced ASK1-catalyzed MKK6 phosphorylation.</title>
        <authorList>
            <person name="Sturchler E."/>
            <person name="Feurstein D."/>
            <person name="McDonald P."/>
            <person name="Duckett D."/>
        </authorList>
    </citation>
    <scope>PHOSPHORYLATION BY MAP3K5/ASK1</scope>
    <scope>ACTIVITY REGULATION</scope>
    <scope>IDENTIFICATION BY MASS SPECTROMETRY</scope>
</reference>
<reference key="26">
    <citation type="journal article" date="2010" name="J. Dermatol. Sci.">
        <title>MKK6 increases the melanocyte dendricity through the regulation of Rho family GTPases.</title>
        <authorList>
            <person name="Kim M.Y."/>
            <person name="Choi T.Y."/>
            <person name="Kim J.H."/>
            <person name="Lee J.H."/>
            <person name="Kim J.G."/>
            <person name="Sohn K.C."/>
            <person name="Yoon K.S."/>
            <person name="Kim C.D."/>
            <person name="Lee J.H."/>
            <person name="Yoon T.J."/>
        </authorList>
    </citation>
    <scope>FUNCTION</scope>
</reference>
<reference key="27">
    <citation type="journal article" date="1998" name="Oncogene">
        <title>Signaling by dual specificity kinases.</title>
        <authorList>
            <person name="Dhanasekaran N."/>
            <person name="Premkumar Reddy E."/>
        </authorList>
    </citation>
    <scope>REVIEW ON ACTIVITY REGULATION</scope>
    <scope>REVIEW ON FUNCTION</scope>
</reference>
<reference key="28">
    <citation type="journal article" date="2011" name="BMC Syst. Biol.">
        <title>Initial characterization of the human central proteome.</title>
        <authorList>
            <person name="Burkard T.R."/>
            <person name="Planyavsky M."/>
            <person name="Kaupe I."/>
            <person name="Breitwieser F.P."/>
            <person name="Buerckstuemmer T."/>
            <person name="Bennett K.L."/>
            <person name="Superti-Furga G."/>
            <person name="Colinge J."/>
        </authorList>
    </citation>
    <scope>IDENTIFICATION BY MASS SPECTROMETRY [LARGE SCALE ANALYSIS]</scope>
</reference>
<reference key="29">
    <citation type="journal article" date="2012" name="Proc. Natl. Acad. Sci. U.S.A.">
        <title>Serine/threonine acetylation of TGFbeta-activated kinase (TAK1) by Yersinia pestis YopJ inhibits innate immune signaling.</title>
        <authorList>
            <person name="Paquette N."/>
            <person name="Conlon J."/>
            <person name="Sweet C."/>
            <person name="Rus F."/>
            <person name="Wilson L."/>
            <person name="Pereira A."/>
            <person name="Rosadini C.V."/>
            <person name="Goutagny N."/>
            <person name="Weber A.N."/>
            <person name="Lane W.S."/>
            <person name="Shaffer S.A."/>
            <person name="Maniatis S."/>
            <person name="Fitzgerald K.A."/>
            <person name="Stuart L."/>
            <person name="Silverman N."/>
        </authorList>
    </citation>
    <scope>ACETYLATION AT SER-207 AND THR-211 (MICROBIAL INFECTION)</scope>
</reference>
<reference key="30">
    <citation type="journal article" date="2013" name="J. Proteome Res.">
        <title>Toward a comprehensive characterization of a human cancer cell phosphoproteome.</title>
        <authorList>
            <person name="Zhou H."/>
            <person name="Di Palma S."/>
            <person name="Preisinger C."/>
            <person name="Peng M."/>
            <person name="Polat A.N."/>
            <person name="Heck A.J."/>
            <person name="Mohammed S."/>
        </authorList>
    </citation>
    <scope>IDENTIFICATION BY MASS SPECTROMETRY [LARGE SCALE ANALYSIS]</scope>
    <source>
        <tissue>Cervix carcinoma</tissue>
    </source>
</reference>
<reference key="31">
    <citation type="journal article" date="2014" name="J. Biol. Chem.">
        <title>F-box only protein 31 (FBXO31) negatively regulates p38 mitogen-activated protein kinase (MAPK) signaling by mediating lysine 48-linked ubiquitination and degradation of mitogen-activated protein kinase kinase 6 (MKK6).</title>
        <authorList>
            <person name="Liu J."/>
            <person name="Han L."/>
            <person name="Li B."/>
            <person name="Yang J."/>
            <person name="Huen M.S."/>
            <person name="Pan X."/>
            <person name="Tsao S.W."/>
            <person name="Cheung A.L."/>
        </authorList>
    </citation>
    <scope>UBIQUITINATION</scope>
    <scope>PHOSPHORYLATION AT SER-207 AND THR-211</scope>
    <scope>MUTAGENESIS OF SER-207 AND THR-211</scope>
</reference>
<reference key="32">
    <citation type="journal article" date="2009" name="Structure">
        <title>The structure of the MAP2K MEK6 reveals an autoinhibitory dimer.</title>
        <authorList>
            <person name="Min X."/>
            <person name="Akella R."/>
            <person name="He H."/>
            <person name="Humphreys J.M."/>
            <person name="Tsutakawa S.E."/>
            <person name="Lee S.J."/>
            <person name="Tainer J.A."/>
            <person name="Cobb M.H."/>
            <person name="Goldsmith E.J."/>
        </authorList>
    </citation>
    <scope>X-RAY CRYSTALLOGRAPHY (2.35 ANGSTROMS) OF 45-332 OF MUTANT ASP-207 AND ASP-211</scope>
    <scope>SUBUNIT</scope>
</reference>
<reference key="33">
    <citation type="submission" date="2011-07" db="PDB data bank">
        <title>Crystal structure of human mitogen-activated protein kinase kinase 6 (mek6) activated mutant (s207d, t211d).</title>
        <authorList>
            <consortium name="Structural genomics consortium (SGC)"/>
        </authorList>
    </citation>
    <scope>X-RAY CRYSTALLOGRAPHY (2.26 ANGSTROMS) OF 47-334</scope>
</reference>
<protein>
    <recommendedName>
        <fullName>Dual specificity mitogen-activated protein kinase kinase 6</fullName>
        <shortName>MAP kinase kinase 6</shortName>
        <shortName>MAPKK 6</shortName>
        <ecNumber>2.7.12.2</ecNumber>
    </recommendedName>
    <alternativeName>
        <fullName>MAPK/ERK kinase 6</fullName>
        <shortName>MEK 6</shortName>
    </alternativeName>
    <alternativeName>
        <fullName>Stress-activated protein kinase kinase 3</fullName>
        <shortName>SAPK kinase 3</shortName>
        <shortName>SAPKK-3</shortName>
        <shortName>SAPKK3</shortName>
    </alternativeName>
</protein>
<proteinExistence type="evidence at protein level"/>
<evidence type="ECO:0000250" key="1"/>
<evidence type="ECO:0000255" key="2">
    <source>
        <dbReference type="PROSITE-ProRule" id="PRU00159"/>
    </source>
</evidence>
<evidence type="ECO:0000255" key="3">
    <source>
        <dbReference type="PROSITE-ProRule" id="PRU10027"/>
    </source>
</evidence>
<evidence type="ECO:0000256" key="4">
    <source>
        <dbReference type="SAM" id="MobiDB-lite"/>
    </source>
</evidence>
<evidence type="ECO:0000269" key="5">
    <source>
    </source>
</evidence>
<evidence type="ECO:0000269" key="6">
    <source>
    </source>
</evidence>
<evidence type="ECO:0000269" key="7">
    <source>
    </source>
</evidence>
<evidence type="ECO:0000269" key="8">
    <source>
    </source>
</evidence>
<evidence type="ECO:0000269" key="9">
    <source>
    </source>
</evidence>
<evidence type="ECO:0000269" key="10">
    <source>
    </source>
</evidence>
<evidence type="ECO:0000269" key="11">
    <source>
    </source>
</evidence>
<evidence type="ECO:0000269" key="12">
    <source>
    </source>
</evidence>
<evidence type="ECO:0000269" key="13">
    <source>
    </source>
</evidence>
<evidence type="ECO:0000269" key="14">
    <source>
    </source>
</evidence>
<evidence type="ECO:0000269" key="15">
    <source>
    </source>
</evidence>
<evidence type="ECO:0000269" key="16">
    <source>
    </source>
</evidence>
<evidence type="ECO:0000269" key="17">
    <source>
    </source>
</evidence>
<evidence type="ECO:0000269" key="18">
    <source>
    </source>
</evidence>
<evidence type="ECO:0000269" key="19">
    <source>
    </source>
</evidence>
<evidence type="ECO:0000269" key="20">
    <source>
    </source>
</evidence>
<evidence type="ECO:0000269" key="21">
    <source>
    </source>
</evidence>
<evidence type="ECO:0000269" key="22">
    <source>
    </source>
</evidence>
<evidence type="ECO:0000269" key="23">
    <source>
    </source>
</evidence>
<evidence type="ECO:0000303" key="24">
    <source>
    </source>
</evidence>
<evidence type="ECO:0000305" key="25"/>
<evidence type="ECO:0007829" key="26">
    <source>
        <dbReference type="PDB" id="3FME"/>
    </source>
</evidence>
<evidence type="ECO:0007829" key="27">
    <source>
        <dbReference type="PDB" id="3VN9"/>
    </source>
</evidence>
<evidence type="ECO:0007829" key="28">
    <source>
        <dbReference type="PDB" id="8PM3"/>
    </source>
</evidence>
<accession>P52564</accession>
<feature type="chain" id="PRO_0000086386" description="Dual specificity mitogen-activated protein kinase kinase 6">
    <location>
        <begin position="1"/>
        <end position="334"/>
    </location>
</feature>
<feature type="domain" description="Protein kinase" evidence="2">
    <location>
        <begin position="53"/>
        <end position="314"/>
    </location>
</feature>
<feature type="region of interest" description="Disordered" evidence="4">
    <location>
        <begin position="1"/>
        <end position="34"/>
    </location>
</feature>
<feature type="region of interest" description="D domain" evidence="1">
    <location>
        <begin position="4"/>
        <end position="19"/>
    </location>
</feature>
<feature type="region of interest" description="DVD domain">
    <location>
        <begin position="311"/>
        <end position="334"/>
    </location>
</feature>
<feature type="compositionally biased region" description="Basic residues" evidence="4">
    <location>
        <begin position="1"/>
        <end position="11"/>
    </location>
</feature>
<feature type="active site" description="Proton acceptor" evidence="2 3">
    <location>
        <position position="179"/>
    </location>
</feature>
<feature type="binding site" evidence="2">
    <location>
        <begin position="59"/>
        <end position="67"/>
    </location>
    <ligand>
        <name>ATP</name>
        <dbReference type="ChEBI" id="CHEBI:30616"/>
    </ligand>
</feature>
<feature type="binding site" evidence="2">
    <location>
        <position position="82"/>
    </location>
    <ligand>
        <name>ATP</name>
        <dbReference type="ChEBI" id="CHEBI:30616"/>
    </ligand>
</feature>
<feature type="site" description="Cleavage; by anthrax lethal factor">
    <location>
        <begin position="14"/>
        <end position="15"/>
    </location>
</feature>
<feature type="modified residue" description="(Microbial infection) O-acetylserine; by Yersinia YopJ; alternate" evidence="12 16">
    <location>
        <position position="207"/>
    </location>
</feature>
<feature type="modified residue" description="Phosphoserine; by MAP3K; alternate" evidence="12 17">
    <location>
        <position position="207"/>
    </location>
</feature>
<feature type="modified residue" description="(Microbial infection) O-acetylthreonine; by Yersinia YopJ; alternate" evidence="12 16">
    <location>
        <position position="211"/>
    </location>
</feature>
<feature type="modified residue" description="Phosphothreonine; by MAP3K; alternate" evidence="12 17">
    <location>
        <position position="211"/>
    </location>
</feature>
<feature type="splice variant" id="VSP_004882" description="In isoform 2." evidence="24">
    <location>
        <begin position="1"/>
        <end position="56"/>
    </location>
</feature>
<feature type="mutagenesis site" description="Decreased phosphorylation by MAP3K, leading to inactivation." evidence="19">
    <original>S</original>
    <variation>A</variation>
    <location>
        <position position="207"/>
    </location>
</feature>
<feature type="mutagenesis site" description="Mimics phosphorylation. Increased interaction with FBXO31. Constitutive activation according to PubMed:8622669, but not to PubMed:8621675." evidence="17 18 19">
    <original>S</original>
    <variation>E</variation>
    <location>
        <position position="207"/>
    </location>
</feature>
<feature type="mutagenesis site" description="Inactivation." evidence="17 19">
    <original>T</original>
    <variation>A</variation>
    <location>
        <position position="211"/>
    </location>
</feature>
<feature type="mutagenesis site" description="Mimics phosphorylation. Increased interaction with FBXO31.Constitutive activation according to PubMed:8622669, but not to PubMed:8621675." evidence="17 18 19">
    <original>T</original>
    <variation>E</variation>
    <location>
        <position position="211"/>
    </location>
</feature>
<feature type="sequence conflict" description="In Ref. 3; AAB03705/AAB03708." evidence="25" ref="3">
    <original>V</original>
    <variation>M</variation>
    <location>
        <position position="125"/>
    </location>
</feature>
<feature type="helix" evidence="28">
    <location>
        <begin position="50"/>
        <end position="52"/>
    </location>
</feature>
<feature type="strand" evidence="28">
    <location>
        <begin position="53"/>
        <end position="62"/>
    </location>
</feature>
<feature type="strand" evidence="28">
    <location>
        <begin position="65"/>
        <end position="72"/>
    </location>
</feature>
<feature type="turn" evidence="28">
    <location>
        <begin position="73"/>
        <end position="75"/>
    </location>
</feature>
<feature type="strand" evidence="28">
    <location>
        <begin position="78"/>
        <end position="84"/>
    </location>
</feature>
<feature type="helix" evidence="28">
    <location>
        <begin position="91"/>
        <end position="105"/>
    </location>
</feature>
<feature type="turn" evidence="28">
    <location>
        <begin position="106"/>
        <end position="108"/>
    </location>
</feature>
<feature type="turn" evidence="27">
    <location>
        <begin position="110"/>
        <end position="112"/>
    </location>
</feature>
<feature type="strand" evidence="28">
    <location>
        <begin position="115"/>
        <end position="121"/>
    </location>
</feature>
<feature type="strand" evidence="28">
    <location>
        <begin position="124"/>
        <end position="129"/>
    </location>
</feature>
<feature type="strand" evidence="26">
    <location>
        <begin position="133"/>
        <end position="135"/>
    </location>
</feature>
<feature type="helix" evidence="28">
    <location>
        <begin position="136"/>
        <end position="145"/>
    </location>
</feature>
<feature type="helix" evidence="28">
    <location>
        <begin position="152"/>
        <end position="173"/>
    </location>
</feature>
<feature type="helix" evidence="28">
    <location>
        <begin position="182"/>
        <end position="184"/>
    </location>
</feature>
<feature type="strand" evidence="28">
    <location>
        <begin position="185"/>
        <end position="187"/>
    </location>
</feature>
<feature type="strand" evidence="28">
    <location>
        <begin position="193"/>
        <end position="195"/>
    </location>
</feature>
<feature type="turn" evidence="28">
    <location>
        <begin position="198"/>
        <end position="201"/>
    </location>
</feature>
<feature type="helix" evidence="27">
    <location>
        <begin position="207"/>
        <end position="212"/>
    </location>
</feature>
<feature type="helix" evidence="28">
    <location>
        <begin position="222"/>
        <end position="225"/>
    </location>
</feature>
<feature type="helix" evidence="28">
    <location>
        <begin position="236"/>
        <end position="252"/>
    </location>
</feature>
<feature type="helix" evidence="28">
    <location>
        <begin position="263"/>
        <end position="272"/>
    </location>
</feature>
<feature type="turn" evidence="28">
    <location>
        <begin position="280"/>
        <end position="282"/>
    </location>
</feature>
<feature type="helix" evidence="28">
    <location>
        <begin position="285"/>
        <end position="294"/>
    </location>
</feature>
<feature type="helix" evidence="28">
    <location>
        <begin position="299"/>
        <end position="301"/>
    </location>
</feature>
<feature type="helix" evidence="28">
    <location>
        <begin position="305"/>
        <end position="308"/>
    </location>
</feature>
<feature type="helix" evidence="28">
    <location>
        <begin position="312"/>
        <end position="319"/>
    </location>
</feature>
<feature type="helix" evidence="28">
    <location>
        <begin position="324"/>
        <end position="332"/>
    </location>
</feature>
<name>MP2K6_HUMAN</name>